<dbReference type="EC" id="2.3.1.16" evidence="1"/>
<dbReference type="EMBL" id="CP000304">
    <property type="protein sequence ID" value="ABP79405.1"/>
    <property type="molecule type" value="Genomic_DNA"/>
</dbReference>
<dbReference type="RefSeq" id="WP_011912882.1">
    <property type="nucleotide sequence ID" value="NC_009434.1"/>
</dbReference>
<dbReference type="SMR" id="A4VKA4"/>
<dbReference type="GeneID" id="66821815"/>
<dbReference type="KEGG" id="psa:PST_1727"/>
<dbReference type="eggNOG" id="COG0183">
    <property type="taxonomic scope" value="Bacteria"/>
</dbReference>
<dbReference type="HOGENOM" id="CLU_031026_2_3_6"/>
<dbReference type="UniPathway" id="UPA00659"/>
<dbReference type="Proteomes" id="UP000000233">
    <property type="component" value="Chromosome"/>
</dbReference>
<dbReference type="GO" id="GO:0005737">
    <property type="term" value="C:cytoplasm"/>
    <property type="evidence" value="ECO:0007669"/>
    <property type="project" value="UniProtKB-SubCell"/>
</dbReference>
<dbReference type="GO" id="GO:0003988">
    <property type="term" value="F:acetyl-CoA C-acyltransferase activity"/>
    <property type="evidence" value="ECO:0007669"/>
    <property type="project" value="UniProtKB-UniRule"/>
</dbReference>
<dbReference type="GO" id="GO:0006635">
    <property type="term" value="P:fatty acid beta-oxidation"/>
    <property type="evidence" value="ECO:0007669"/>
    <property type="project" value="UniProtKB-UniRule"/>
</dbReference>
<dbReference type="GO" id="GO:0010124">
    <property type="term" value="P:phenylacetate catabolic process"/>
    <property type="evidence" value="ECO:0007669"/>
    <property type="project" value="TreeGrafter"/>
</dbReference>
<dbReference type="CDD" id="cd00751">
    <property type="entry name" value="thiolase"/>
    <property type="match status" value="1"/>
</dbReference>
<dbReference type="FunFam" id="3.40.47.10:FF:000010">
    <property type="entry name" value="Acetyl-CoA acetyltransferase (Thiolase)"/>
    <property type="match status" value="1"/>
</dbReference>
<dbReference type="Gene3D" id="3.40.47.10">
    <property type="match status" value="2"/>
</dbReference>
<dbReference type="HAMAP" id="MF_01620">
    <property type="entry name" value="FadA"/>
    <property type="match status" value="1"/>
</dbReference>
<dbReference type="InterPro" id="IPR012805">
    <property type="entry name" value="FadA"/>
</dbReference>
<dbReference type="InterPro" id="IPR002155">
    <property type="entry name" value="Thiolase"/>
</dbReference>
<dbReference type="InterPro" id="IPR016039">
    <property type="entry name" value="Thiolase-like"/>
</dbReference>
<dbReference type="InterPro" id="IPR050215">
    <property type="entry name" value="Thiolase-like_sf_Thiolase"/>
</dbReference>
<dbReference type="InterPro" id="IPR020615">
    <property type="entry name" value="Thiolase_acyl_enz_int_AS"/>
</dbReference>
<dbReference type="InterPro" id="IPR020610">
    <property type="entry name" value="Thiolase_AS"/>
</dbReference>
<dbReference type="InterPro" id="IPR020617">
    <property type="entry name" value="Thiolase_C"/>
</dbReference>
<dbReference type="InterPro" id="IPR020613">
    <property type="entry name" value="Thiolase_CS"/>
</dbReference>
<dbReference type="InterPro" id="IPR020616">
    <property type="entry name" value="Thiolase_N"/>
</dbReference>
<dbReference type="NCBIfam" id="TIGR01930">
    <property type="entry name" value="AcCoA-C-Actrans"/>
    <property type="match status" value="1"/>
</dbReference>
<dbReference type="NCBIfam" id="TIGR02445">
    <property type="entry name" value="fadA"/>
    <property type="match status" value="1"/>
</dbReference>
<dbReference type="NCBIfam" id="NF006510">
    <property type="entry name" value="PRK08947.1"/>
    <property type="match status" value="1"/>
</dbReference>
<dbReference type="PANTHER" id="PTHR43853:SF11">
    <property type="entry name" value="3-KETOACYL-COA THIOLASE FADA"/>
    <property type="match status" value="1"/>
</dbReference>
<dbReference type="PANTHER" id="PTHR43853">
    <property type="entry name" value="3-KETOACYL-COA THIOLASE, PEROXISOMAL"/>
    <property type="match status" value="1"/>
</dbReference>
<dbReference type="Pfam" id="PF02803">
    <property type="entry name" value="Thiolase_C"/>
    <property type="match status" value="1"/>
</dbReference>
<dbReference type="Pfam" id="PF00108">
    <property type="entry name" value="Thiolase_N"/>
    <property type="match status" value="1"/>
</dbReference>
<dbReference type="PIRSF" id="PIRSF000429">
    <property type="entry name" value="Ac-CoA_Ac_transf"/>
    <property type="match status" value="1"/>
</dbReference>
<dbReference type="SUPFAM" id="SSF53901">
    <property type="entry name" value="Thiolase-like"/>
    <property type="match status" value="2"/>
</dbReference>
<dbReference type="PROSITE" id="PS00098">
    <property type="entry name" value="THIOLASE_1"/>
    <property type="match status" value="1"/>
</dbReference>
<dbReference type="PROSITE" id="PS00737">
    <property type="entry name" value="THIOLASE_2"/>
    <property type="match status" value="1"/>
</dbReference>
<dbReference type="PROSITE" id="PS00099">
    <property type="entry name" value="THIOLASE_3"/>
    <property type="match status" value="1"/>
</dbReference>
<comment type="function">
    <text evidence="1">Catalyzes the final step of fatty acid oxidation in which acetyl-CoA is released and the CoA ester of a fatty acid two carbons shorter is formed.</text>
</comment>
<comment type="catalytic activity">
    <reaction evidence="1">
        <text>an acyl-CoA + acetyl-CoA = a 3-oxoacyl-CoA + CoA</text>
        <dbReference type="Rhea" id="RHEA:21564"/>
        <dbReference type="ChEBI" id="CHEBI:57287"/>
        <dbReference type="ChEBI" id="CHEBI:57288"/>
        <dbReference type="ChEBI" id="CHEBI:58342"/>
        <dbReference type="ChEBI" id="CHEBI:90726"/>
        <dbReference type="EC" id="2.3.1.16"/>
    </reaction>
</comment>
<comment type="pathway">
    <text evidence="1">Lipid metabolism; fatty acid beta-oxidation.</text>
</comment>
<comment type="subunit">
    <text evidence="1">Heterotetramer of two alpha chains (FadB) and two beta chains (FadA).</text>
</comment>
<comment type="subcellular location">
    <subcellularLocation>
        <location evidence="1">Cytoplasm</location>
    </subcellularLocation>
</comment>
<comment type="similarity">
    <text evidence="1">Belongs to the thiolase-like superfamily. Thiolase family.</text>
</comment>
<protein>
    <recommendedName>
        <fullName evidence="1">3-ketoacyl-CoA thiolase</fullName>
        <ecNumber evidence="1">2.3.1.16</ecNumber>
    </recommendedName>
    <alternativeName>
        <fullName evidence="1">Acetyl-CoA acyltransferase</fullName>
    </alternativeName>
    <alternativeName>
        <fullName evidence="1">Beta-ketothiolase</fullName>
    </alternativeName>
    <alternativeName>
        <fullName evidence="1">Fatty acid oxidation complex subunit beta</fullName>
    </alternativeName>
</protein>
<proteinExistence type="inferred from homology"/>
<name>FADA_STUS1</name>
<keyword id="KW-0012">Acyltransferase</keyword>
<keyword id="KW-0963">Cytoplasm</keyword>
<keyword id="KW-0276">Fatty acid metabolism</keyword>
<keyword id="KW-0442">Lipid degradation</keyword>
<keyword id="KW-0443">Lipid metabolism</keyword>
<keyword id="KW-1185">Reference proteome</keyword>
<keyword id="KW-0808">Transferase</keyword>
<accession>A4VKA4</accession>
<sequence length="391" mass="41738">MSLNPRDAVIVDFGRTPMGRSKGGMHRNTRAETMSAQLIDGLLARNPKIDPAEVEDVIWGCVNQTLEQGWNIARMASLLTRIPHTSAGQTVSRLCGSSMSALHTAVQAIQTNNGDVFVIGGVEHMGHVSMMHGVDPNPQLSLHAAKASGMMGLTAEMLGKMHGITREAQDQFGYRSHQLAWKATQEGKFKDEIIPMEGHDENGFLKVFDYDETIRPETTLEGLAELKPAFNPKGGTVTAGTSSQITDGASCMIVMSAQRAKDLGLQPMAVVRAMALAGVDPAIMGYGPVPSTQKALKRAGLTMDDISHVELNEAFAAQALPVLKDLKLLDKMEEKVNLHGGAIALGHPFGCSGARISGTLLNVMKQNNGTLGVATMCIGLGQGISTVFERL</sequence>
<feature type="chain" id="PRO_0000323551" description="3-ketoacyl-CoA thiolase">
    <location>
        <begin position="1"/>
        <end position="391"/>
    </location>
</feature>
<feature type="active site" description="Acyl-thioester intermediate" evidence="1">
    <location>
        <position position="95"/>
    </location>
</feature>
<feature type="active site" description="Proton acceptor" evidence="1">
    <location>
        <position position="347"/>
    </location>
</feature>
<feature type="active site" description="Proton acceptor" evidence="1">
    <location>
        <position position="377"/>
    </location>
</feature>
<organism>
    <name type="scientific">Stutzerimonas stutzeri (strain A1501)</name>
    <name type="common">Pseudomonas stutzeri</name>
    <dbReference type="NCBI Taxonomy" id="379731"/>
    <lineage>
        <taxon>Bacteria</taxon>
        <taxon>Pseudomonadati</taxon>
        <taxon>Pseudomonadota</taxon>
        <taxon>Gammaproteobacteria</taxon>
        <taxon>Pseudomonadales</taxon>
        <taxon>Pseudomonadaceae</taxon>
        <taxon>Stutzerimonas</taxon>
    </lineage>
</organism>
<evidence type="ECO:0000255" key="1">
    <source>
        <dbReference type="HAMAP-Rule" id="MF_01620"/>
    </source>
</evidence>
<reference key="1">
    <citation type="journal article" date="2008" name="Proc. Natl. Acad. Sci. U.S.A.">
        <title>Nitrogen fixation island and rhizosphere competence traits in the genome of root-associated Pseudomonas stutzeri A1501.</title>
        <authorList>
            <person name="Yan Y."/>
            <person name="Yang J."/>
            <person name="Dou Y."/>
            <person name="Chen M."/>
            <person name="Ping S."/>
            <person name="Peng J."/>
            <person name="Lu W."/>
            <person name="Zhang W."/>
            <person name="Yao Z."/>
            <person name="Li H."/>
            <person name="Liu W."/>
            <person name="He S."/>
            <person name="Geng L."/>
            <person name="Zhang X."/>
            <person name="Yang F."/>
            <person name="Yu H."/>
            <person name="Zhan Y."/>
            <person name="Li D."/>
            <person name="Lin Z."/>
            <person name="Wang Y."/>
            <person name="Elmerich C."/>
            <person name="Lin M."/>
            <person name="Jin Q."/>
        </authorList>
    </citation>
    <scope>NUCLEOTIDE SEQUENCE [LARGE SCALE GENOMIC DNA]</scope>
    <source>
        <strain>A1501</strain>
    </source>
</reference>
<gene>
    <name evidence="1" type="primary">fadA</name>
    <name type="synonym">foaB</name>
    <name type="ordered locus">PST_1727</name>
</gene>